<dbReference type="EC" id="7.1.2.2" evidence="1"/>
<dbReference type="EMBL" id="CP001138">
    <property type="protein sequence ID" value="ACH52777.1"/>
    <property type="molecule type" value="Genomic_DNA"/>
</dbReference>
<dbReference type="RefSeq" id="WP_000190499.1">
    <property type="nucleotide sequence ID" value="NC_011149.1"/>
</dbReference>
<dbReference type="SMR" id="B5EYZ6"/>
<dbReference type="GeneID" id="66758154"/>
<dbReference type="KEGG" id="sea:SeAg_B4090"/>
<dbReference type="HOGENOM" id="CLU_022398_0_2_6"/>
<dbReference type="Proteomes" id="UP000008819">
    <property type="component" value="Chromosome"/>
</dbReference>
<dbReference type="GO" id="GO:0005886">
    <property type="term" value="C:plasma membrane"/>
    <property type="evidence" value="ECO:0007669"/>
    <property type="project" value="UniProtKB-SubCell"/>
</dbReference>
<dbReference type="GO" id="GO:0045259">
    <property type="term" value="C:proton-transporting ATP synthase complex"/>
    <property type="evidence" value="ECO:0007669"/>
    <property type="project" value="UniProtKB-KW"/>
</dbReference>
<dbReference type="GO" id="GO:0005524">
    <property type="term" value="F:ATP binding"/>
    <property type="evidence" value="ECO:0007669"/>
    <property type="project" value="UniProtKB-UniRule"/>
</dbReference>
<dbReference type="GO" id="GO:0016887">
    <property type="term" value="F:ATP hydrolysis activity"/>
    <property type="evidence" value="ECO:0007669"/>
    <property type="project" value="InterPro"/>
</dbReference>
<dbReference type="GO" id="GO:0046933">
    <property type="term" value="F:proton-transporting ATP synthase activity, rotational mechanism"/>
    <property type="evidence" value="ECO:0007669"/>
    <property type="project" value="UniProtKB-UniRule"/>
</dbReference>
<dbReference type="CDD" id="cd18110">
    <property type="entry name" value="ATP-synt_F1_beta_C"/>
    <property type="match status" value="1"/>
</dbReference>
<dbReference type="CDD" id="cd18115">
    <property type="entry name" value="ATP-synt_F1_beta_N"/>
    <property type="match status" value="1"/>
</dbReference>
<dbReference type="CDD" id="cd01133">
    <property type="entry name" value="F1-ATPase_beta_CD"/>
    <property type="match status" value="1"/>
</dbReference>
<dbReference type="FunFam" id="1.10.1140.10:FF:000001">
    <property type="entry name" value="ATP synthase subunit beta"/>
    <property type="match status" value="1"/>
</dbReference>
<dbReference type="FunFam" id="2.40.10.170:FF:000003">
    <property type="entry name" value="ATP synthase subunit beta"/>
    <property type="match status" value="1"/>
</dbReference>
<dbReference type="FunFam" id="3.40.50.300:FF:000004">
    <property type="entry name" value="ATP synthase subunit beta"/>
    <property type="match status" value="1"/>
</dbReference>
<dbReference type="Gene3D" id="2.40.10.170">
    <property type="match status" value="1"/>
</dbReference>
<dbReference type="Gene3D" id="1.10.1140.10">
    <property type="entry name" value="Bovine Mitochondrial F1-atpase, Atp Synthase Beta Chain, Chain D, domain 3"/>
    <property type="match status" value="1"/>
</dbReference>
<dbReference type="Gene3D" id="3.40.50.300">
    <property type="entry name" value="P-loop containing nucleotide triphosphate hydrolases"/>
    <property type="match status" value="1"/>
</dbReference>
<dbReference type="HAMAP" id="MF_01347">
    <property type="entry name" value="ATP_synth_beta_bact"/>
    <property type="match status" value="1"/>
</dbReference>
<dbReference type="InterPro" id="IPR003593">
    <property type="entry name" value="AAA+_ATPase"/>
</dbReference>
<dbReference type="InterPro" id="IPR055190">
    <property type="entry name" value="ATP-synt_VA_C"/>
</dbReference>
<dbReference type="InterPro" id="IPR005722">
    <property type="entry name" value="ATP_synth_F1_bsu"/>
</dbReference>
<dbReference type="InterPro" id="IPR020003">
    <property type="entry name" value="ATPase_a/bsu_AS"/>
</dbReference>
<dbReference type="InterPro" id="IPR050053">
    <property type="entry name" value="ATPase_alpha/beta_chains"/>
</dbReference>
<dbReference type="InterPro" id="IPR004100">
    <property type="entry name" value="ATPase_F1/V1/A1_a/bsu_N"/>
</dbReference>
<dbReference type="InterPro" id="IPR036121">
    <property type="entry name" value="ATPase_F1/V1/A1_a/bsu_N_sf"/>
</dbReference>
<dbReference type="InterPro" id="IPR000194">
    <property type="entry name" value="ATPase_F1/V1/A1_a/bsu_nucl-bd"/>
</dbReference>
<dbReference type="InterPro" id="IPR024034">
    <property type="entry name" value="ATPase_F1/V1_b/a_C"/>
</dbReference>
<dbReference type="InterPro" id="IPR027417">
    <property type="entry name" value="P-loop_NTPase"/>
</dbReference>
<dbReference type="NCBIfam" id="TIGR01039">
    <property type="entry name" value="atpD"/>
    <property type="match status" value="1"/>
</dbReference>
<dbReference type="PANTHER" id="PTHR15184">
    <property type="entry name" value="ATP SYNTHASE"/>
    <property type="match status" value="1"/>
</dbReference>
<dbReference type="PANTHER" id="PTHR15184:SF71">
    <property type="entry name" value="ATP SYNTHASE SUBUNIT BETA, MITOCHONDRIAL"/>
    <property type="match status" value="1"/>
</dbReference>
<dbReference type="Pfam" id="PF00006">
    <property type="entry name" value="ATP-synt_ab"/>
    <property type="match status" value="1"/>
</dbReference>
<dbReference type="Pfam" id="PF02874">
    <property type="entry name" value="ATP-synt_ab_N"/>
    <property type="match status" value="1"/>
</dbReference>
<dbReference type="Pfam" id="PF22919">
    <property type="entry name" value="ATP-synt_VA_C"/>
    <property type="match status" value="1"/>
</dbReference>
<dbReference type="SMART" id="SM00382">
    <property type="entry name" value="AAA"/>
    <property type="match status" value="1"/>
</dbReference>
<dbReference type="SUPFAM" id="SSF47917">
    <property type="entry name" value="C-terminal domain of alpha and beta subunits of F1 ATP synthase"/>
    <property type="match status" value="1"/>
</dbReference>
<dbReference type="SUPFAM" id="SSF50615">
    <property type="entry name" value="N-terminal domain of alpha and beta subunits of F1 ATP synthase"/>
    <property type="match status" value="1"/>
</dbReference>
<dbReference type="SUPFAM" id="SSF52540">
    <property type="entry name" value="P-loop containing nucleoside triphosphate hydrolases"/>
    <property type="match status" value="1"/>
</dbReference>
<dbReference type="PROSITE" id="PS00152">
    <property type="entry name" value="ATPASE_ALPHA_BETA"/>
    <property type="match status" value="1"/>
</dbReference>
<accession>B5EYZ6</accession>
<keyword id="KW-0066">ATP synthesis</keyword>
<keyword id="KW-0067">ATP-binding</keyword>
<keyword id="KW-0997">Cell inner membrane</keyword>
<keyword id="KW-1003">Cell membrane</keyword>
<keyword id="KW-0139">CF(1)</keyword>
<keyword id="KW-0375">Hydrogen ion transport</keyword>
<keyword id="KW-0406">Ion transport</keyword>
<keyword id="KW-0472">Membrane</keyword>
<keyword id="KW-0547">Nucleotide-binding</keyword>
<keyword id="KW-1278">Translocase</keyword>
<keyword id="KW-0813">Transport</keyword>
<protein>
    <recommendedName>
        <fullName evidence="1">ATP synthase subunit beta</fullName>
        <ecNumber evidence="1">7.1.2.2</ecNumber>
    </recommendedName>
    <alternativeName>
        <fullName evidence="1">ATP synthase F1 sector subunit beta</fullName>
    </alternativeName>
    <alternativeName>
        <fullName evidence="1">F-ATPase subunit beta</fullName>
    </alternativeName>
</protein>
<comment type="function">
    <text evidence="1">Produces ATP from ADP in the presence of a proton gradient across the membrane. The catalytic sites are hosted primarily by the beta subunits.</text>
</comment>
<comment type="catalytic activity">
    <reaction evidence="1">
        <text>ATP + H2O + 4 H(+)(in) = ADP + phosphate + 5 H(+)(out)</text>
        <dbReference type="Rhea" id="RHEA:57720"/>
        <dbReference type="ChEBI" id="CHEBI:15377"/>
        <dbReference type="ChEBI" id="CHEBI:15378"/>
        <dbReference type="ChEBI" id="CHEBI:30616"/>
        <dbReference type="ChEBI" id="CHEBI:43474"/>
        <dbReference type="ChEBI" id="CHEBI:456216"/>
        <dbReference type="EC" id="7.1.2.2"/>
    </reaction>
</comment>
<comment type="subunit">
    <text evidence="1">F-type ATPases have 2 components, CF(1) - the catalytic core - and CF(0) - the membrane proton channel. CF(1) has five subunits: alpha(3), beta(3), gamma(1), delta(1), epsilon(1). CF(0) has three main subunits: a(1), b(2) and c(9-12). The alpha and beta chains form an alternating ring which encloses part of the gamma chain. CF(1) is attached to CF(0) by a central stalk formed by the gamma and epsilon chains, while a peripheral stalk is formed by the delta and b chains.</text>
</comment>
<comment type="subcellular location">
    <subcellularLocation>
        <location evidence="1">Cell inner membrane</location>
        <topology evidence="1">Peripheral membrane protein</topology>
    </subcellularLocation>
</comment>
<comment type="similarity">
    <text evidence="1">Belongs to the ATPase alpha/beta chains family.</text>
</comment>
<name>ATPB_SALA4</name>
<gene>
    <name evidence="1" type="primary">atpD</name>
    <name type="ordered locus">SeAg_B4090</name>
</gene>
<proteinExistence type="inferred from homology"/>
<organism>
    <name type="scientific">Salmonella agona (strain SL483)</name>
    <dbReference type="NCBI Taxonomy" id="454166"/>
    <lineage>
        <taxon>Bacteria</taxon>
        <taxon>Pseudomonadati</taxon>
        <taxon>Pseudomonadota</taxon>
        <taxon>Gammaproteobacteria</taxon>
        <taxon>Enterobacterales</taxon>
        <taxon>Enterobacteriaceae</taxon>
        <taxon>Salmonella</taxon>
    </lineage>
</organism>
<evidence type="ECO:0000255" key="1">
    <source>
        <dbReference type="HAMAP-Rule" id="MF_01347"/>
    </source>
</evidence>
<feature type="chain" id="PRO_1000143537" description="ATP synthase subunit beta">
    <location>
        <begin position="1"/>
        <end position="460"/>
    </location>
</feature>
<feature type="binding site" evidence="1">
    <location>
        <begin position="150"/>
        <end position="157"/>
    </location>
    <ligand>
        <name>ATP</name>
        <dbReference type="ChEBI" id="CHEBI:30616"/>
    </ligand>
</feature>
<sequence length="460" mass="50283">MATGKIVQVIGAVVDVEFPQDAVPRVYDALEVQNGNEKLVLEVQQQLGGGIVRTIAMGSSDGLRRGLDVKDLEHPIEVPVGKATLGRIMNVLGEPVDMKGEIGEEERWAIHRAAPSYEELSNSQELLETGIKVIDLMCPFAKGGKVGLFGGAGVGKTVNMMELIRNIAIEHSGYSVFAGVGERTREGNDFYHEMTDSNVIDKVSLVYGQMNEPPGNRLRVALTGLTMAEKFRDEGRDVLLFVDNIYRYTLAGTEVSALLGRMPSAVGYQPTLAEEMGVLQERITSTKTGSITSVQAVYVPADDLTDPSPATTFAHLDATVVLSRQIASLGIYPAVDPLDSTSRQLDPLVVGQEHYDTARGVQSILQRYQELKDIIAILGMDELSEEDKLVVARARKIQRFLSQPFFVAEVFTGSPGKYVSLKDTIRGFKGIMEGEYDHLPEQAFYMVGSIDEAVEKAKKL</sequence>
<reference key="1">
    <citation type="journal article" date="2011" name="J. Bacteriol.">
        <title>Comparative genomics of 28 Salmonella enterica isolates: evidence for CRISPR-mediated adaptive sublineage evolution.</title>
        <authorList>
            <person name="Fricke W.F."/>
            <person name="Mammel M.K."/>
            <person name="McDermott P.F."/>
            <person name="Tartera C."/>
            <person name="White D.G."/>
            <person name="Leclerc J.E."/>
            <person name="Ravel J."/>
            <person name="Cebula T.A."/>
        </authorList>
    </citation>
    <scope>NUCLEOTIDE SEQUENCE [LARGE SCALE GENOMIC DNA]</scope>
    <source>
        <strain>SL483</strain>
    </source>
</reference>